<sequence>MNEAVSPGALSTLFTDARTHNGWRETPVSDETLRELYALMKWGPTSANCSPARIVFIRTVEGKERLRPALSSGNLQKTLTAPVTAIVAWDSEFYERLPLLFPHGDARSWFTSSPQLAEETAFRNSSMQAAYLIVACRALGLDTGPMSGFDRQYVDDAFFAGSTLKSNLLINIGYGDSSKLYARLPRLSFEEACGLL</sequence>
<dbReference type="EC" id="1.1.1.298" evidence="1"/>
<dbReference type="EMBL" id="AP009240">
    <property type="protein sequence ID" value="BAG76594.1"/>
    <property type="molecule type" value="Genomic_DNA"/>
</dbReference>
<dbReference type="RefSeq" id="WP_001001196.1">
    <property type="nucleotide sequence ID" value="NC_011415.1"/>
</dbReference>
<dbReference type="SMR" id="B6I984"/>
<dbReference type="KEGG" id="ecy:ECSE_1070"/>
<dbReference type="HOGENOM" id="CLU_084441_0_0_6"/>
<dbReference type="Proteomes" id="UP000008199">
    <property type="component" value="Chromosome"/>
</dbReference>
<dbReference type="GO" id="GO:0035527">
    <property type="term" value="F:3-hydroxypropionate dehydrogenase (NADP+) activity"/>
    <property type="evidence" value="ECO:0007669"/>
    <property type="project" value="UniProtKB-UniRule"/>
</dbReference>
<dbReference type="GO" id="GO:0019740">
    <property type="term" value="P:nitrogen utilization"/>
    <property type="evidence" value="ECO:0007669"/>
    <property type="project" value="UniProtKB-UniRule"/>
</dbReference>
<dbReference type="GO" id="GO:0006212">
    <property type="term" value="P:uracil catabolic process"/>
    <property type="evidence" value="ECO:0007669"/>
    <property type="project" value="UniProtKB-UniRule"/>
</dbReference>
<dbReference type="CDD" id="cd02148">
    <property type="entry name" value="RutE-like"/>
    <property type="match status" value="1"/>
</dbReference>
<dbReference type="FunFam" id="3.40.109.10:FF:000003">
    <property type="entry name" value="Probable malonic semialdehyde reductase RutE"/>
    <property type="match status" value="1"/>
</dbReference>
<dbReference type="Gene3D" id="3.40.109.10">
    <property type="entry name" value="NADH Oxidase"/>
    <property type="match status" value="1"/>
</dbReference>
<dbReference type="HAMAP" id="MF_01204">
    <property type="entry name" value="Oxidoreductase_RutE_HadB"/>
    <property type="match status" value="1"/>
</dbReference>
<dbReference type="InterPro" id="IPR029479">
    <property type="entry name" value="Nitroreductase"/>
</dbReference>
<dbReference type="InterPro" id="IPR000415">
    <property type="entry name" value="Nitroreductase-like"/>
</dbReference>
<dbReference type="InterPro" id="IPR050461">
    <property type="entry name" value="Nitroreductase_HadB/RutE"/>
</dbReference>
<dbReference type="InterPro" id="IPR023936">
    <property type="entry name" value="RutE-like"/>
</dbReference>
<dbReference type="NCBIfam" id="NF003768">
    <property type="entry name" value="PRK05365.1"/>
    <property type="match status" value="1"/>
</dbReference>
<dbReference type="PANTHER" id="PTHR43543">
    <property type="entry name" value="MALONIC SEMIALDEHYDE REDUCTASE RUTE-RELATED"/>
    <property type="match status" value="1"/>
</dbReference>
<dbReference type="PANTHER" id="PTHR43543:SF1">
    <property type="entry name" value="MALONIC SEMIALDEHYDE REDUCTASE RUTE-RELATED"/>
    <property type="match status" value="1"/>
</dbReference>
<dbReference type="Pfam" id="PF00881">
    <property type="entry name" value="Nitroreductase"/>
    <property type="match status" value="1"/>
</dbReference>
<dbReference type="SUPFAM" id="SSF55469">
    <property type="entry name" value="FMN-dependent nitroreductase-like"/>
    <property type="match status" value="1"/>
</dbReference>
<proteinExistence type="inferred from homology"/>
<accession>B6I984</accession>
<organism>
    <name type="scientific">Escherichia coli (strain SE11)</name>
    <dbReference type="NCBI Taxonomy" id="409438"/>
    <lineage>
        <taxon>Bacteria</taxon>
        <taxon>Pseudomonadati</taxon>
        <taxon>Pseudomonadota</taxon>
        <taxon>Gammaproteobacteria</taxon>
        <taxon>Enterobacterales</taxon>
        <taxon>Enterobacteriaceae</taxon>
        <taxon>Escherichia</taxon>
    </lineage>
</organism>
<reference key="1">
    <citation type="journal article" date="2008" name="DNA Res.">
        <title>Complete genome sequence and comparative analysis of the wild-type commensal Escherichia coli strain SE11 isolated from a healthy adult.</title>
        <authorList>
            <person name="Oshima K."/>
            <person name="Toh H."/>
            <person name="Ogura Y."/>
            <person name="Sasamoto H."/>
            <person name="Morita H."/>
            <person name="Park S.-H."/>
            <person name="Ooka T."/>
            <person name="Iyoda S."/>
            <person name="Taylor T.D."/>
            <person name="Hayashi T."/>
            <person name="Itoh K."/>
            <person name="Hattori M."/>
        </authorList>
    </citation>
    <scope>NUCLEOTIDE SEQUENCE [LARGE SCALE GENOMIC DNA]</scope>
    <source>
        <strain>SE11</strain>
    </source>
</reference>
<feature type="chain" id="PRO_1000138695" description="Probable malonic semialdehyde reductase RutE">
    <location>
        <begin position="1"/>
        <end position="196"/>
    </location>
</feature>
<evidence type="ECO:0000255" key="1">
    <source>
        <dbReference type="HAMAP-Rule" id="MF_01204"/>
    </source>
</evidence>
<protein>
    <recommendedName>
        <fullName evidence="1">Probable malonic semialdehyde reductase RutE</fullName>
        <ecNumber evidence="1">1.1.1.298</ecNumber>
    </recommendedName>
</protein>
<keyword id="KW-0285">Flavoprotein</keyword>
<keyword id="KW-0288">FMN</keyword>
<keyword id="KW-0520">NAD</keyword>
<keyword id="KW-0521">NADP</keyword>
<keyword id="KW-0560">Oxidoreductase</keyword>
<gene>
    <name evidence="1" type="primary">rutE</name>
    <name type="ordered locus">ECSE_1070</name>
</gene>
<name>RUTE_ECOSE</name>
<comment type="function">
    <text evidence="1">May reduce toxic product malonic semialdehyde to 3-hydroxypropionic acid, which is excreted.</text>
</comment>
<comment type="catalytic activity">
    <reaction evidence="1">
        <text>3-hydroxypropanoate + NADP(+) = 3-oxopropanoate + NADPH + H(+)</text>
        <dbReference type="Rhea" id="RHEA:26438"/>
        <dbReference type="ChEBI" id="CHEBI:15378"/>
        <dbReference type="ChEBI" id="CHEBI:16510"/>
        <dbReference type="ChEBI" id="CHEBI:33190"/>
        <dbReference type="ChEBI" id="CHEBI:57783"/>
        <dbReference type="ChEBI" id="CHEBI:58349"/>
        <dbReference type="EC" id="1.1.1.298"/>
    </reaction>
</comment>
<comment type="cofactor">
    <cofactor evidence="1">
        <name>FMN</name>
        <dbReference type="ChEBI" id="CHEBI:58210"/>
    </cofactor>
</comment>
<comment type="induction">
    <text evidence="1">Up-regulated by the nitrogen regulatory protein C (NtrC also called GlnG) and repressed by RutR.</text>
</comment>
<comment type="similarity">
    <text evidence="1">Belongs to the nitroreductase family. HadB/RutE subfamily.</text>
</comment>